<accession>A3NCH2</accession>
<organism>
    <name type="scientific">Burkholderia pseudomallei (strain 668)</name>
    <dbReference type="NCBI Taxonomy" id="320373"/>
    <lineage>
        <taxon>Bacteria</taxon>
        <taxon>Pseudomonadati</taxon>
        <taxon>Pseudomonadota</taxon>
        <taxon>Betaproteobacteria</taxon>
        <taxon>Burkholderiales</taxon>
        <taxon>Burkholderiaceae</taxon>
        <taxon>Burkholderia</taxon>
        <taxon>pseudomallei group</taxon>
    </lineage>
</organism>
<feature type="chain" id="PRO_1000026375" description="Fluoride-specific ion channel FluC">
    <location>
        <begin position="1"/>
        <end position="128"/>
    </location>
</feature>
<feature type="transmembrane region" description="Helical" evidence="1">
    <location>
        <begin position="5"/>
        <end position="25"/>
    </location>
</feature>
<feature type="transmembrane region" description="Helical" evidence="1">
    <location>
        <begin position="35"/>
        <end position="55"/>
    </location>
</feature>
<feature type="transmembrane region" description="Helical" evidence="1">
    <location>
        <begin position="67"/>
        <end position="87"/>
    </location>
</feature>
<feature type="transmembrane region" description="Helical" evidence="1">
    <location>
        <begin position="96"/>
        <end position="116"/>
    </location>
</feature>
<feature type="binding site" evidence="1">
    <location>
        <position position="75"/>
    </location>
    <ligand>
        <name>Na(+)</name>
        <dbReference type="ChEBI" id="CHEBI:29101"/>
        <note>structural</note>
    </ligand>
</feature>
<feature type="binding site" evidence="1">
    <location>
        <position position="78"/>
    </location>
    <ligand>
        <name>Na(+)</name>
        <dbReference type="ChEBI" id="CHEBI:29101"/>
        <note>structural</note>
    </ligand>
</feature>
<comment type="function">
    <text evidence="1">Fluoride-specific ion channel. Important for reducing fluoride concentration in the cell, thus reducing its toxicity.</text>
</comment>
<comment type="catalytic activity">
    <reaction evidence="1">
        <text>fluoride(in) = fluoride(out)</text>
        <dbReference type="Rhea" id="RHEA:76159"/>
        <dbReference type="ChEBI" id="CHEBI:17051"/>
    </reaction>
    <physiologicalReaction direction="left-to-right" evidence="1">
        <dbReference type="Rhea" id="RHEA:76160"/>
    </physiologicalReaction>
</comment>
<comment type="activity regulation">
    <text evidence="1">Na(+) is not transported, but it plays an essential structural role and its presence is essential for fluoride channel function.</text>
</comment>
<comment type="subcellular location">
    <subcellularLocation>
        <location evidence="1">Cell inner membrane</location>
        <topology evidence="1">Multi-pass membrane protein</topology>
    </subcellularLocation>
</comment>
<comment type="similarity">
    <text evidence="1">Belongs to the fluoride channel Fluc/FEX (TC 1.A.43) family.</text>
</comment>
<reference key="1">
    <citation type="journal article" date="2010" name="Genome Biol. Evol.">
        <title>Continuing evolution of Burkholderia mallei through genome reduction and large-scale rearrangements.</title>
        <authorList>
            <person name="Losada L."/>
            <person name="Ronning C.M."/>
            <person name="DeShazer D."/>
            <person name="Woods D."/>
            <person name="Fedorova N."/>
            <person name="Kim H.S."/>
            <person name="Shabalina S.A."/>
            <person name="Pearson T.R."/>
            <person name="Brinkac L."/>
            <person name="Tan P."/>
            <person name="Nandi T."/>
            <person name="Crabtree J."/>
            <person name="Badger J."/>
            <person name="Beckstrom-Sternberg S."/>
            <person name="Saqib M."/>
            <person name="Schutzer S.E."/>
            <person name="Keim P."/>
            <person name="Nierman W.C."/>
        </authorList>
    </citation>
    <scope>NUCLEOTIDE SEQUENCE [LARGE SCALE GENOMIC DNA]</scope>
    <source>
        <strain>668</strain>
    </source>
</reference>
<proteinExistence type="inferred from homology"/>
<protein>
    <recommendedName>
        <fullName evidence="1">Fluoride-specific ion channel FluC</fullName>
    </recommendedName>
</protein>
<evidence type="ECO:0000255" key="1">
    <source>
        <dbReference type="HAMAP-Rule" id="MF_00454"/>
    </source>
</evidence>
<keyword id="KW-0997">Cell inner membrane</keyword>
<keyword id="KW-1003">Cell membrane</keyword>
<keyword id="KW-0407">Ion channel</keyword>
<keyword id="KW-0406">Ion transport</keyword>
<keyword id="KW-0472">Membrane</keyword>
<keyword id="KW-0479">Metal-binding</keyword>
<keyword id="KW-0915">Sodium</keyword>
<keyword id="KW-0812">Transmembrane</keyword>
<keyword id="KW-1133">Transmembrane helix</keyword>
<keyword id="KW-0813">Transport</keyword>
<dbReference type="EMBL" id="CP000570">
    <property type="protein sequence ID" value="ABN84830.1"/>
    <property type="molecule type" value="Genomic_DNA"/>
</dbReference>
<dbReference type="RefSeq" id="WP_004522284.1">
    <property type="nucleotide sequence ID" value="NC_009074.1"/>
</dbReference>
<dbReference type="SMR" id="A3NCH2"/>
<dbReference type="GeneID" id="93061216"/>
<dbReference type="KEGG" id="bpd:BURPS668_3030"/>
<dbReference type="HOGENOM" id="CLU_114342_3_3_4"/>
<dbReference type="GO" id="GO:0005886">
    <property type="term" value="C:plasma membrane"/>
    <property type="evidence" value="ECO:0007669"/>
    <property type="project" value="UniProtKB-SubCell"/>
</dbReference>
<dbReference type="GO" id="GO:0062054">
    <property type="term" value="F:fluoride channel activity"/>
    <property type="evidence" value="ECO:0007669"/>
    <property type="project" value="UniProtKB-UniRule"/>
</dbReference>
<dbReference type="GO" id="GO:0046872">
    <property type="term" value="F:metal ion binding"/>
    <property type="evidence" value="ECO:0007669"/>
    <property type="project" value="UniProtKB-KW"/>
</dbReference>
<dbReference type="GO" id="GO:0140114">
    <property type="term" value="P:cellular detoxification of fluoride"/>
    <property type="evidence" value="ECO:0007669"/>
    <property type="project" value="UniProtKB-UniRule"/>
</dbReference>
<dbReference type="HAMAP" id="MF_00454">
    <property type="entry name" value="FluC"/>
    <property type="match status" value="1"/>
</dbReference>
<dbReference type="InterPro" id="IPR003691">
    <property type="entry name" value="FluC"/>
</dbReference>
<dbReference type="NCBIfam" id="TIGR00494">
    <property type="entry name" value="crcB"/>
    <property type="match status" value="1"/>
</dbReference>
<dbReference type="NCBIfam" id="NF010792">
    <property type="entry name" value="PRK14196.1"/>
    <property type="match status" value="1"/>
</dbReference>
<dbReference type="PANTHER" id="PTHR28259">
    <property type="entry name" value="FLUORIDE EXPORT PROTEIN 1-RELATED"/>
    <property type="match status" value="1"/>
</dbReference>
<dbReference type="PANTHER" id="PTHR28259:SF1">
    <property type="entry name" value="FLUORIDE EXPORT PROTEIN 1-RELATED"/>
    <property type="match status" value="1"/>
</dbReference>
<dbReference type="Pfam" id="PF02537">
    <property type="entry name" value="CRCB"/>
    <property type="match status" value="1"/>
</dbReference>
<gene>
    <name evidence="1" type="primary">fluC</name>
    <name evidence="1" type="synonym">crcB</name>
    <name type="ordered locus">BURPS668_3030</name>
</gene>
<sequence length="128" mass="13488">MFYSIVAIFVGAGLGALLRWFLSIGLNALLPEVPLGTLASNLIGGYLIGIAVVAFATRAGLPPEWRLFVITGFMGGLTTFSTYSVEVMTHAVQGEFGWALAVAALHLIGSFTLTGLGMWTARAWLAPA</sequence>
<name>FLUC_BURP6</name>